<feature type="chain" id="PRO_0000074616" description="Peptidyl-lysine N-acetyltransferase YjaB">
    <location>
        <begin position="1"/>
        <end position="145"/>
    </location>
</feature>
<feature type="domain" description="N-acetyltransferase" evidence="2">
    <location>
        <begin position="3"/>
        <end position="144"/>
    </location>
</feature>
<feature type="sequence conflict" description="In Ref. 2; M74188." evidence="3" ref="2">
    <original>ALTLAPGL</original>
    <variation>GVNTGAGI</variation>
    <location>
        <begin position="95"/>
        <end position="102"/>
    </location>
</feature>
<sequence>MMINIRRSRHEEGEKLIAIWRRSVDATHDFLSNAYRAELEELVSDFLPEAPLWVAVTDQDEPVGFMLLTGEHMDALFIDPDVRGQGIGKMLVEHALTLAPGLTTNVNEQNTQAVGFYKKMGFKVTGRSEVDDLGKPYPLLNLIYP</sequence>
<organism>
    <name type="scientific">Salmonella typhimurium (strain LT2 / SGSC1412 / ATCC 700720)</name>
    <dbReference type="NCBI Taxonomy" id="99287"/>
    <lineage>
        <taxon>Bacteria</taxon>
        <taxon>Pseudomonadati</taxon>
        <taxon>Pseudomonadota</taxon>
        <taxon>Gammaproteobacteria</taxon>
        <taxon>Enterobacterales</taxon>
        <taxon>Enterobacteriaceae</taxon>
        <taxon>Salmonella</taxon>
    </lineage>
</organism>
<proteinExistence type="inferred from homology"/>
<accession>P40677</accession>
<gene>
    <name type="primary">yjaB</name>
    <name type="ordered locus">STM4181</name>
</gene>
<keyword id="KW-0012">Acyltransferase</keyword>
<keyword id="KW-1185">Reference proteome</keyword>
<keyword id="KW-0808">Transferase</keyword>
<dbReference type="EC" id="2.3.1.-" evidence="1"/>
<dbReference type="EMBL" id="AE006468">
    <property type="protein sequence ID" value="AAL23005.1"/>
    <property type="molecule type" value="Genomic_DNA"/>
</dbReference>
<dbReference type="EMBL" id="M74188">
    <property type="status" value="NOT_ANNOTATED_CDS"/>
    <property type="molecule type" value="Genomic_DNA"/>
</dbReference>
<dbReference type="RefSeq" id="NP_463046.1">
    <property type="nucleotide sequence ID" value="NC_003197.2"/>
</dbReference>
<dbReference type="RefSeq" id="WP_000973243.1">
    <property type="nucleotide sequence ID" value="NC_003197.2"/>
</dbReference>
<dbReference type="SMR" id="P40677"/>
<dbReference type="STRING" id="99287.STM4181"/>
<dbReference type="PaxDb" id="99287-STM4181"/>
<dbReference type="GeneID" id="1255707"/>
<dbReference type="KEGG" id="stm:STM4181"/>
<dbReference type="PATRIC" id="fig|99287.12.peg.4393"/>
<dbReference type="HOGENOM" id="CLU_013985_21_0_6"/>
<dbReference type="PhylomeDB" id="P40677"/>
<dbReference type="BioCyc" id="SENT99287:STM4181-MONOMER"/>
<dbReference type="Proteomes" id="UP000001014">
    <property type="component" value="Chromosome"/>
</dbReference>
<dbReference type="GO" id="GO:0061733">
    <property type="term" value="F:protein-lysine-acetyltransferase activity"/>
    <property type="evidence" value="ECO:0007669"/>
    <property type="project" value="RHEA"/>
</dbReference>
<dbReference type="CDD" id="cd04301">
    <property type="entry name" value="NAT_SF"/>
    <property type="match status" value="1"/>
</dbReference>
<dbReference type="Gene3D" id="3.40.630.30">
    <property type="match status" value="1"/>
</dbReference>
<dbReference type="InterPro" id="IPR016181">
    <property type="entry name" value="Acyl_CoA_acyltransferase"/>
</dbReference>
<dbReference type="InterPro" id="IPR000182">
    <property type="entry name" value="GNAT_dom"/>
</dbReference>
<dbReference type="NCBIfam" id="NF007807">
    <property type="entry name" value="PRK10514.1"/>
    <property type="match status" value="1"/>
</dbReference>
<dbReference type="PANTHER" id="PTHR43800">
    <property type="entry name" value="PEPTIDYL-LYSINE N-ACETYLTRANSFERASE YJAB"/>
    <property type="match status" value="1"/>
</dbReference>
<dbReference type="PANTHER" id="PTHR43800:SF1">
    <property type="entry name" value="PEPTIDYL-LYSINE N-ACETYLTRANSFERASE YJAB"/>
    <property type="match status" value="1"/>
</dbReference>
<dbReference type="Pfam" id="PF13673">
    <property type="entry name" value="Acetyltransf_10"/>
    <property type="match status" value="1"/>
</dbReference>
<dbReference type="SUPFAM" id="SSF55729">
    <property type="entry name" value="Acyl-CoA N-acyltransferases (Nat)"/>
    <property type="match status" value="1"/>
</dbReference>
<dbReference type="PROSITE" id="PS51186">
    <property type="entry name" value="GNAT"/>
    <property type="match status" value="1"/>
</dbReference>
<comment type="function">
    <text evidence="1">N-epsilon-lysine acetyltransferase that catalyzes acetylation of a large number of proteins.</text>
</comment>
<comment type="catalytic activity">
    <reaction evidence="1">
        <text>L-lysyl-[protein] + acetyl-CoA = N(6)-acetyl-L-lysyl-[protein] + CoA + H(+)</text>
        <dbReference type="Rhea" id="RHEA:45948"/>
        <dbReference type="Rhea" id="RHEA-COMP:9752"/>
        <dbReference type="Rhea" id="RHEA-COMP:10731"/>
        <dbReference type="ChEBI" id="CHEBI:15378"/>
        <dbReference type="ChEBI" id="CHEBI:29969"/>
        <dbReference type="ChEBI" id="CHEBI:57287"/>
        <dbReference type="ChEBI" id="CHEBI:57288"/>
        <dbReference type="ChEBI" id="CHEBI:61930"/>
    </reaction>
</comment>
<comment type="similarity">
    <text evidence="3">Belongs to the acetyltransferase family.</text>
</comment>
<protein>
    <recommendedName>
        <fullName evidence="1">Peptidyl-lysine N-acetyltransferase YjaB</fullName>
        <ecNumber evidence="1">2.3.1.-</ecNumber>
    </recommendedName>
    <alternativeName>
        <fullName evidence="1">KAT</fullName>
    </alternativeName>
</protein>
<evidence type="ECO:0000250" key="1">
    <source>
        <dbReference type="UniProtKB" id="P09163"/>
    </source>
</evidence>
<evidence type="ECO:0000255" key="2">
    <source>
        <dbReference type="PROSITE-ProRule" id="PRU00532"/>
    </source>
</evidence>
<evidence type="ECO:0000305" key="3"/>
<reference key="1">
    <citation type="journal article" date="2001" name="Nature">
        <title>Complete genome sequence of Salmonella enterica serovar Typhimurium LT2.</title>
        <authorList>
            <person name="McClelland M."/>
            <person name="Sanderson K.E."/>
            <person name="Spieth J."/>
            <person name="Clifton S.W."/>
            <person name="Latreille P."/>
            <person name="Courtney L."/>
            <person name="Porwollik S."/>
            <person name="Ali J."/>
            <person name="Dante M."/>
            <person name="Du F."/>
            <person name="Hou S."/>
            <person name="Layman D."/>
            <person name="Leonard S."/>
            <person name="Nguyen C."/>
            <person name="Scott K."/>
            <person name="Holmes A."/>
            <person name="Grewal N."/>
            <person name="Mulvaney E."/>
            <person name="Ryan E."/>
            <person name="Sun H."/>
            <person name="Florea L."/>
            <person name="Miller W."/>
            <person name="Stoneking T."/>
            <person name="Nhan M."/>
            <person name="Waterston R."/>
            <person name="Wilson R.K."/>
        </authorList>
    </citation>
    <scope>NUCLEOTIDE SEQUENCE [LARGE SCALE GENOMIC DNA]</scope>
    <source>
        <strain>LT2 / SGSC1412 / ATCC 700720</strain>
    </source>
</reference>
<reference key="2">
    <citation type="journal article" date="1992" name="J. Bacteriol.">
        <title>Regulation of the Salmonella typhimurium metA gene by the metR protein and homocysteine.</title>
        <authorList>
            <person name="Mares R."/>
            <person name="Urbanowski M.L."/>
            <person name="Stauffer G.V."/>
        </authorList>
    </citation>
    <scope>NUCLEOTIDE SEQUENCE [GENOMIC DNA] OF 1-102</scope>
</reference>
<name>YJAB_SALTY</name>